<reference key="1">
    <citation type="journal article" date="1989" name="Virology">
        <title>Sequence of cowpea chlorotic mottle virus RNAs 2 and 3 and evidence of a recombination event during bromovirus evolution.</title>
        <authorList>
            <person name="Allison R.F."/>
            <person name="Janda M."/>
            <person name="Ahlquist P."/>
        </authorList>
    </citation>
    <scope>NUCLEOTIDE SEQUENCE [GENOMIC RNA]</scope>
</reference>
<reference key="2">
    <citation type="journal article" date="1999" name="J. Gen. Virol.">
        <title>Effect of C-terminal deletions in the movement protein of cowpea chlorotic mottle virus on cell-to-cell and long-distance movement.</title>
        <authorList>
            <person name="Osman F."/>
            <person name="Schmitz I."/>
            <person name="Rao A.L."/>
        </authorList>
    </citation>
    <scope>FUNCTION</scope>
</reference>
<accession>P20180</accession>
<dbReference type="EMBL" id="M28818">
    <property type="protein sequence ID" value="AAA46372.1"/>
    <property type="molecule type" value="Genomic_RNA"/>
</dbReference>
<dbReference type="PIR" id="JU0118">
    <property type="entry name" value="P3WMCC"/>
</dbReference>
<dbReference type="RefSeq" id="NP_613276.1">
    <property type="nucleotide sequence ID" value="NC_003542.1"/>
</dbReference>
<dbReference type="KEGG" id="vg:962151"/>
<dbReference type="OrthoDB" id="11253at10239"/>
<dbReference type="Proteomes" id="UP000008445">
    <property type="component" value="Genome"/>
</dbReference>
<dbReference type="GO" id="GO:0044219">
    <property type="term" value="C:host cell plasmodesma"/>
    <property type="evidence" value="ECO:0007669"/>
    <property type="project" value="UniProtKB-SubCell"/>
</dbReference>
<dbReference type="GO" id="GO:0046740">
    <property type="term" value="P:transport of virus in host, cell to cell"/>
    <property type="evidence" value="ECO:0007669"/>
    <property type="project" value="UniProtKB-KW"/>
</dbReference>
<dbReference type="InterPro" id="IPR000603">
    <property type="entry name" value="MPV"/>
</dbReference>
<dbReference type="Pfam" id="PF00803">
    <property type="entry name" value="3A"/>
    <property type="match status" value="1"/>
</dbReference>
<organismHost>
    <name type="scientific">Glycine max</name>
    <name type="common">Soybean</name>
    <name type="synonym">Glycine hispida</name>
    <dbReference type="NCBI Taxonomy" id="3847"/>
</organismHost>
<organismHost>
    <name type="scientific">Vigna unguiculata</name>
    <name type="common">Cowpea</name>
    <dbReference type="NCBI Taxonomy" id="3917"/>
</organismHost>
<evidence type="ECO:0000250" key="1"/>
<evidence type="ECO:0000269" key="2">
    <source>
    </source>
</evidence>
<evidence type="ECO:0000305" key="3"/>
<organism>
    <name type="scientific">Cowpea chlorotic mottle virus</name>
    <name type="common">CCMV</name>
    <dbReference type="NCBI Taxonomy" id="12303"/>
    <lineage>
        <taxon>Viruses</taxon>
        <taxon>Riboviria</taxon>
        <taxon>Orthornavirae</taxon>
        <taxon>Kitrinoviricota</taxon>
        <taxon>Alsuviricetes</taxon>
        <taxon>Martellivirales</taxon>
        <taxon>Bromoviridae</taxon>
        <taxon>Bromovirus</taxon>
    </lineage>
</organism>
<keyword id="KW-1031">Host cell junction</keyword>
<keyword id="KW-0813">Transport</keyword>
<keyword id="KW-0916">Viral movement protein</keyword>
<comment type="function">
    <text evidence="1 2">Transports viral genome to neighboring plant cells directly through plasmosdesmata, without any budding. The movement protein allows efficient cell to cell propagation, by bypassing the host cell wall barrier. Acts by forming a tubular structure at the host plasmodesmata, enlarging it enough to allow free passage of virion capsids (By similarity).</text>
</comment>
<comment type="subcellular location">
    <subcellularLocation>
        <location evidence="1">Host cell junction</location>
        <location evidence="1">Host plasmodesma</location>
    </subcellularLocation>
    <text evidence="1">Assembles into long tubular structures at the surface of the infected protoplast.</text>
</comment>
<comment type="similarity">
    <text evidence="3">Belongs to the bromovirus movement protein family.</text>
</comment>
<feature type="chain" id="PRO_0000083232" description="Movement protein">
    <location>
        <begin position="1"/>
        <end position="302"/>
    </location>
</feature>
<name>MVP_CCMV</name>
<proteinExistence type="inferred from homology"/>
<sequence length="302" mass="33363">MSNTTFRPFTGSSRTVVEGEQAGAQDDMSLLQSLFSDKSREEFAKECKLGMYTNLSSNNRLNYIDLVPKNTGSRALNLFKSEYEKGHIPSSGVLSIPRVLVFLVRTTTVTESGSVTIRLVDLISASSVEILEPVDGTQEATIPISSLPAIVCFSPSYDCPMQMIGNRHRCFGLVTQLDGVISSGSTVVMSHAYWSANFRSKPNNYKQYAPMYKYVEPFDRLKRLSRKQLKNYVRGITNQSVNHGYLLGKPLLKTDEQDPEMIVLEEESLTPTDSNGVGKDKIAVTAKSVAGLPTASLSINRR</sequence>
<protein>
    <recommendedName>
        <fullName>Movement protein</fullName>
        <shortName>MP</shortName>
    </recommendedName>
    <alternativeName>
        <fullName>Protein 3A</fullName>
    </alternativeName>
</protein>
<gene>
    <name type="ORF">ORF3a</name>
</gene>